<comment type="function">
    <text evidence="1">Catalyzes the reversible interconversion of serine and glycine with tetrahydrofolate (THF) serving as the one-carbon carrier. This reaction serves as the major source of one-carbon groups required for the biosynthesis of purines, thymidylate, methionine, and other important biomolecules. Also exhibits THF-independent aldolase activity toward beta-hydroxyamino acids, producing glycine and aldehydes, via a retro-aldol mechanism.</text>
</comment>
<comment type="catalytic activity">
    <reaction evidence="1">
        <text>(6R)-5,10-methylene-5,6,7,8-tetrahydrofolate + glycine + H2O = (6S)-5,6,7,8-tetrahydrofolate + L-serine</text>
        <dbReference type="Rhea" id="RHEA:15481"/>
        <dbReference type="ChEBI" id="CHEBI:15377"/>
        <dbReference type="ChEBI" id="CHEBI:15636"/>
        <dbReference type="ChEBI" id="CHEBI:33384"/>
        <dbReference type="ChEBI" id="CHEBI:57305"/>
        <dbReference type="ChEBI" id="CHEBI:57453"/>
        <dbReference type="EC" id="2.1.2.1"/>
    </reaction>
</comment>
<comment type="cofactor">
    <cofactor evidence="1">
        <name>pyridoxal 5'-phosphate</name>
        <dbReference type="ChEBI" id="CHEBI:597326"/>
    </cofactor>
</comment>
<comment type="pathway">
    <text evidence="1">One-carbon metabolism; tetrahydrofolate interconversion.</text>
</comment>
<comment type="pathway">
    <text evidence="1">Amino-acid biosynthesis; glycine biosynthesis; glycine from L-serine: step 1/1.</text>
</comment>
<comment type="subunit">
    <text evidence="1">Homodimer.</text>
</comment>
<comment type="subcellular location">
    <subcellularLocation>
        <location evidence="1">Cytoplasm</location>
    </subcellularLocation>
</comment>
<comment type="similarity">
    <text evidence="1">Belongs to the SHMT family.</text>
</comment>
<organism>
    <name type="scientific">Streptococcus pyogenes serotype M12 (strain MGAS9429)</name>
    <dbReference type="NCBI Taxonomy" id="370551"/>
    <lineage>
        <taxon>Bacteria</taxon>
        <taxon>Bacillati</taxon>
        <taxon>Bacillota</taxon>
        <taxon>Bacilli</taxon>
        <taxon>Lactobacillales</taxon>
        <taxon>Streptococcaceae</taxon>
        <taxon>Streptococcus</taxon>
    </lineage>
</organism>
<name>GLYA_STRPC</name>
<reference key="1">
    <citation type="journal article" date="2006" name="Proc. Natl. Acad. Sci. U.S.A.">
        <title>Molecular genetic anatomy of inter- and intraserotype variation in the human bacterial pathogen group A Streptococcus.</title>
        <authorList>
            <person name="Beres S.B."/>
            <person name="Richter E.W."/>
            <person name="Nagiec M.J."/>
            <person name="Sumby P."/>
            <person name="Porcella S.F."/>
            <person name="DeLeo F.R."/>
            <person name="Musser J.M."/>
        </authorList>
    </citation>
    <scope>NUCLEOTIDE SEQUENCE [LARGE SCALE GENOMIC DNA]</scope>
    <source>
        <strain>MGAS9429</strain>
    </source>
</reference>
<feature type="chain" id="PRO_1000006329" description="Serine hydroxymethyltransferase">
    <location>
        <begin position="1"/>
        <end position="420"/>
    </location>
</feature>
<feature type="binding site" evidence="1">
    <location>
        <position position="123"/>
    </location>
    <ligand>
        <name>(6S)-5,6,7,8-tetrahydrofolate</name>
        <dbReference type="ChEBI" id="CHEBI:57453"/>
    </ligand>
</feature>
<feature type="binding site" evidence="1">
    <location>
        <begin position="127"/>
        <end position="129"/>
    </location>
    <ligand>
        <name>(6S)-5,6,7,8-tetrahydrofolate</name>
        <dbReference type="ChEBI" id="CHEBI:57453"/>
    </ligand>
</feature>
<feature type="binding site" evidence="1">
    <location>
        <begin position="357"/>
        <end position="359"/>
    </location>
    <ligand>
        <name>(6S)-5,6,7,8-tetrahydrofolate</name>
        <dbReference type="ChEBI" id="CHEBI:57453"/>
    </ligand>
</feature>
<feature type="site" description="Plays an important role in substrate specificity" evidence="1">
    <location>
        <position position="231"/>
    </location>
</feature>
<feature type="modified residue" description="N6-(pyridoxal phosphate)lysine" evidence="1">
    <location>
        <position position="232"/>
    </location>
</feature>
<accession>Q1JLP8</accession>
<dbReference type="EC" id="2.1.2.1" evidence="1"/>
<dbReference type="EMBL" id="CP000259">
    <property type="protein sequence ID" value="ABF32171.1"/>
    <property type="molecule type" value="Genomic_DNA"/>
</dbReference>
<dbReference type="SMR" id="Q1JLP8"/>
<dbReference type="KEGG" id="spk:MGAS9429_Spy0984"/>
<dbReference type="HOGENOM" id="CLU_022477_2_1_9"/>
<dbReference type="UniPathway" id="UPA00193"/>
<dbReference type="UniPathway" id="UPA00288">
    <property type="reaction ID" value="UER01023"/>
</dbReference>
<dbReference type="Proteomes" id="UP000002433">
    <property type="component" value="Chromosome"/>
</dbReference>
<dbReference type="GO" id="GO:0005829">
    <property type="term" value="C:cytosol"/>
    <property type="evidence" value="ECO:0007669"/>
    <property type="project" value="TreeGrafter"/>
</dbReference>
<dbReference type="GO" id="GO:0004372">
    <property type="term" value="F:glycine hydroxymethyltransferase activity"/>
    <property type="evidence" value="ECO:0007669"/>
    <property type="project" value="UniProtKB-UniRule"/>
</dbReference>
<dbReference type="GO" id="GO:0030170">
    <property type="term" value="F:pyridoxal phosphate binding"/>
    <property type="evidence" value="ECO:0007669"/>
    <property type="project" value="UniProtKB-UniRule"/>
</dbReference>
<dbReference type="GO" id="GO:0019264">
    <property type="term" value="P:glycine biosynthetic process from serine"/>
    <property type="evidence" value="ECO:0007669"/>
    <property type="project" value="UniProtKB-UniRule"/>
</dbReference>
<dbReference type="GO" id="GO:0035999">
    <property type="term" value="P:tetrahydrofolate interconversion"/>
    <property type="evidence" value="ECO:0007669"/>
    <property type="project" value="UniProtKB-UniRule"/>
</dbReference>
<dbReference type="CDD" id="cd00378">
    <property type="entry name" value="SHMT"/>
    <property type="match status" value="1"/>
</dbReference>
<dbReference type="FunFam" id="3.40.640.10:FF:000001">
    <property type="entry name" value="Serine hydroxymethyltransferase"/>
    <property type="match status" value="1"/>
</dbReference>
<dbReference type="Gene3D" id="3.90.1150.10">
    <property type="entry name" value="Aspartate Aminotransferase, domain 1"/>
    <property type="match status" value="1"/>
</dbReference>
<dbReference type="Gene3D" id="3.40.640.10">
    <property type="entry name" value="Type I PLP-dependent aspartate aminotransferase-like (Major domain)"/>
    <property type="match status" value="1"/>
</dbReference>
<dbReference type="HAMAP" id="MF_00051">
    <property type="entry name" value="SHMT"/>
    <property type="match status" value="1"/>
</dbReference>
<dbReference type="InterPro" id="IPR015424">
    <property type="entry name" value="PyrdxlP-dep_Trfase"/>
</dbReference>
<dbReference type="InterPro" id="IPR015421">
    <property type="entry name" value="PyrdxlP-dep_Trfase_major"/>
</dbReference>
<dbReference type="InterPro" id="IPR015422">
    <property type="entry name" value="PyrdxlP-dep_Trfase_small"/>
</dbReference>
<dbReference type="InterPro" id="IPR001085">
    <property type="entry name" value="Ser_HO-MeTrfase"/>
</dbReference>
<dbReference type="InterPro" id="IPR049943">
    <property type="entry name" value="Ser_HO-MeTrfase-like"/>
</dbReference>
<dbReference type="InterPro" id="IPR019798">
    <property type="entry name" value="Ser_HO-MeTrfase_PLP_BS"/>
</dbReference>
<dbReference type="InterPro" id="IPR039429">
    <property type="entry name" value="SHMT-like_dom"/>
</dbReference>
<dbReference type="NCBIfam" id="NF000586">
    <property type="entry name" value="PRK00011.1"/>
    <property type="match status" value="1"/>
</dbReference>
<dbReference type="PANTHER" id="PTHR11680">
    <property type="entry name" value="SERINE HYDROXYMETHYLTRANSFERASE"/>
    <property type="match status" value="1"/>
</dbReference>
<dbReference type="PANTHER" id="PTHR11680:SF35">
    <property type="entry name" value="SERINE HYDROXYMETHYLTRANSFERASE 1"/>
    <property type="match status" value="1"/>
</dbReference>
<dbReference type="Pfam" id="PF00464">
    <property type="entry name" value="SHMT"/>
    <property type="match status" value="1"/>
</dbReference>
<dbReference type="PIRSF" id="PIRSF000412">
    <property type="entry name" value="SHMT"/>
    <property type="match status" value="1"/>
</dbReference>
<dbReference type="SUPFAM" id="SSF53383">
    <property type="entry name" value="PLP-dependent transferases"/>
    <property type="match status" value="1"/>
</dbReference>
<dbReference type="PROSITE" id="PS00096">
    <property type="entry name" value="SHMT"/>
    <property type="match status" value="1"/>
</dbReference>
<gene>
    <name evidence="1" type="primary">glyA</name>
    <name type="ordered locus">MGAS9429_Spy0984</name>
</gene>
<sequence length="420" mass="45320">MTMIFDKGNVEDFDKELWDAIHAEEERQEHHIELIASENMVSKAVMAAQGSVLTNKYAEGYPGNRYYGGTECVDIVETLAIERAKKLFGAAFANVQAHSGSQANAAAYMALIEAGDTVLGMDLAAGGHLTHGSPVNFSGKTYHFVGYSVDADTEMLNYEAILEQAKAVQPKLIVAGASAYSRSIDFEKFRAIADHVGAYLMVDMAHIAGLVAAGVHPSPVHYAHIVTSTTHKTLRGPRGGLILTNDEALAKKINSAVFPGLQGGPLEHVIAAKAVAFKEALDPAFKDYAQAIIDNTAAMAAVFAQDDRFRLISGGTDNHVFLVDVTKVIANGKLAQNLLDEVNITLNKNAIPFETLSPFKTSGIRIGCAAITSRGMGVKESQTIAHLIIKALVNHDQETILEEVRQEVRQLTDAFPLYKK</sequence>
<keyword id="KW-0028">Amino-acid biosynthesis</keyword>
<keyword id="KW-0963">Cytoplasm</keyword>
<keyword id="KW-0554">One-carbon metabolism</keyword>
<keyword id="KW-0663">Pyridoxal phosphate</keyword>
<keyword id="KW-0808">Transferase</keyword>
<protein>
    <recommendedName>
        <fullName evidence="1">Serine hydroxymethyltransferase</fullName>
        <shortName evidence="1">SHMT</shortName>
        <shortName evidence="1">Serine methylase</shortName>
        <ecNumber evidence="1">2.1.2.1</ecNumber>
    </recommendedName>
</protein>
<proteinExistence type="inferred from homology"/>
<evidence type="ECO:0000255" key="1">
    <source>
        <dbReference type="HAMAP-Rule" id="MF_00051"/>
    </source>
</evidence>